<comment type="function">
    <text evidence="2 3">Transcription factor that recognizes and binds to the AP-1 consensus motif 5'-TGA[GC]TCA-3' (By similarity). Heterodimerizes with proteins of the FOS family to form an AP-1 transcription complex, thereby enhancing its DNA binding activity to the AP-1 consensus sequence 5'-TGA[GC]TCA-3' and enhancing its transcriptional activity (By similarity). Together with FOSB, plays a role in activation-induced cell death of T cells by binding to the AP-1 promoter site of FASLG/CD95L, and inducing its transcription in response to activation of the TCR/CD3 signaling pathway (By similarity). Promotes activity of NR5A1 when phosphorylated by HIPK3 leading to increased steroidogenic gene expression upon cAMP signaling pathway stimulation. Involved in activated KRAS-mediated transcriptional activation of USP28. Binds to the USP28 promoter (By similarity).</text>
</comment>
<comment type="subunit">
    <text evidence="2 3 6 7 8">Heterodimer with either BATF3 or ATF7 (PubMed:9154808). Heterodimer with FOS (By similarity). Heterodimer with FOSB (By similarity). Component of an AP-1 transcription factor complex composed of JUN-FOS heterodimers (By similarity). As part of the AP-1 transcription factor complex, forms heterodimers with FOSB, thereby binding to the AP-1 consensus sequence and stimulating transcription (By similarity). Interacts with FOS and FOSB (By similarity). The ATF7/JUN heterodimer is essential for ATF7 transactivation activity. Interacts with MYBBP1A, SP1, SPIB and TCF20. Interacts with COPS5; indirectly leading to its phosphorylation. Interacts with TSC22D3 (via N-terminus); this interaction inhibits the binding of active AP1 to its target DNA. Interacts with HIVEP3. Component of the SMAD3/SMAD4/JUN/FOS/complex which forms at the AP1 promoter site. The SMAD3/SMAD4 heterodimer acts synergistically with the JUN/FOS heterodimer to activate transcription in response to TGF-beta. Interacts (via its basic DNA binding and leucine zipper domains) with SMAD3 (via an N-terminal domain); the interaction is required for TGF-beta-mediated transactivation of the SMAD3/SMAD4/JUN/FOS/complex (By similarity). Binds to HIPK3 (By similarity). Interacts with methylated RNF187 (PubMed:20852630). Interacts (when phosphorylated) with FBXW7 (By similarity). Interacts with PRR7 (PubMed:27458189). Found in a complex with PRR7 and FBXW7 (By similarity). Interacts with PRR7 and FBXW7; the interaction inhibits ubiquitination-mediated JUN degradation promoting its phosphorylation and transcriptional activity (By similarity). Interacts with RBM39 (By similarity). Interacts with PAGE4 (By similarity). Interacts with ARK2N and CSNK2B; the interaction with ARK2N is mediated by CSNK2B (By similarity).</text>
</comment>
<comment type="interaction">
    <interactant intactId="EBI-7709365">
        <id>P17325</id>
    </interactant>
    <interactant intactId="EBI-8590661">
        <id>P12841</id>
        <label>Fos</label>
    </interactant>
    <organismsDiffer>false</organismsDiffer>
    <experiments>2</experiments>
</comment>
<comment type="interaction">
    <interactant intactId="EBI-7709365">
        <id>P17325</id>
    </interactant>
    <interactant intactId="EBI-7456505">
        <id>P49185</id>
        <label>Mapk8</label>
    </interactant>
    <organismsDiffer>false</organismsDiffer>
    <experiments>2</experiments>
</comment>
<comment type="subcellular location">
    <subcellularLocation>
        <location evidence="2">Nucleus</location>
    </subcellularLocation>
</comment>
<comment type="PTM">
    <text evidence="2">Phosphorylated by CaMK4 and PRKDC; phosphorylation enhances the transcriptional activity. Phosphorylated by HIPK3. Phosphorylated by DYRK2 at Ser-246; this primes the protein for subsequent phosphorylation by GSK3B at Thr-242. Phosphorylated at Thr-242, Ser-246 and Ser-252 by GSK3B; phosphorylation reduces its ability to bind DNA. Phosphorylated by PLK3 following hypoxia or UV irradiation, leading to increase DNA-binding activity (By similarity). Phosphorylated by VRK1 (By similarity).</text>
</comment>
<comment type="PTM">
    <text evidence="2 7">Ubiquitinated (PubMed:27458189). Ubiquitination by the SCF(FBXW7) is leading to its degradation (By similarity). Ubiquitination takes place following phosphorylation, that promotes interaction with FBXW7 (By similarity).</text>
</comment>
<comment type="PTM">
    <text evidence="2">Acetylated at Lys-271 by EP300.</text>
</comment>
<comment type="similarity">
    <text evidence="9">Belongs to the bZIP family. Jun subfamily.</text>
</comment>
<name>JUN_RAT</name>
<feature type="chain" id="PRO_0000076432" description="Transcription factor Jun">
    <location>
        <begin position="1"/>
        <end position="334"/>
    </location>
</feature>
<feature type="domain" description="bZIP" evidence="4">
    <location>
        <begin position="255"/>
        <end position="318"/>
    </location>
</feature>
<feature type="region of interest" description="Interaction with PAGE4" evidence="2">
    <location>
        <begin position="150"/>
        <end position="226"/>
    </location>
</feature>
<feature type="region of interest" description="Disordered" evidence="5">
    <location>
        <begin position="184"/>
        <end position="217"/>
    </location>
</feature>
<feature type="region of interest" description="Basic motif" evidence="4">
    <location>
        <begin position="255"/>
        <end position="282"/>
    </location>
</feature>
<feature type="region of interest" description="Leucine-zipper" evidence="4">
    <location>
        <begin position="283"/>
        <end position="311"/>
    </location>
</feature>
<feature type="compositionally biased region" description="Low complexity" evidence="5">
    <location>
        <begin position="189"/>
        <end position="206"/>
    </location>
</feature>
<feature type="site" description="Necessary for synergistic transcriptional activity with SMAD3" evidence="1">
    <location>
        <position position="275"/>
    </location>
</feature>
<feature type="modified residue" description="Phosphothreonine; by PAK2" evidence="2">
    <location>
        <position position="2"/>
    </location>
</feature>
<feature type="modified residue" description="Phosphothreonine; by PAK2" evidence="2">
    <location>
        <position position="8"/>
    </location>
</feature>
<feature type="modified residue" description="N6-acetyllysine; alternate" evidence="3">
    <location>
        <position position="56"/>
    </location>
</feature>
<feature type="modified residue" description="Phosphoserine" evidence="2">
    <location>
        <position position="58"/>
    </location>
</feature>
<feature type="modified residue" description="Phosphoserine; by MAPK8 and PLK3" evidence="2">
    <location>
        <position position="63"/>
    </location>
</feature>
<feature type="modified residue" description="Phosphoserine; by MAPK8 and PLK3" evidence="2">
    <location>
        <position position="73"/>
    </location>
</feature>
<feature type="modified residue" description="Phosphothreonine; by PAK2" evidence="2">
    <location>
        <position position="89"/>
    </location>
</feature>
<feature type="modified residue" description="Phosphothreonine" evidence="2">
    <location>
        <position position="91"/>
    </location>
</feature>
<feature type="modified residue" description="Phosphothreonine; by PAK2" evidence="2">
    <location>
        <position position="93"/>
    </location>
</feature>
<feature type="modified residue" description="Phosphothreonine; by GSK3-beta" evidence="2">
    <location>
        <position position="242"/>
    </location>
</feature>
<feature type="modified residue" description="Phosphoserine; by DYRK2 and GSK3-beta" evidence="2">
    <location>
        <position position="246"/>
    </location>
</feature>
<feature type="modified residue" description="Phosphoserine; by GSK3-beta" evidence="2">
    <location>
        <position position="252"/>
    </location>
</feature>
<feature type="modified residue" description="N6-acetyllysine" evidence="2">
    <location>
        <position position="274"/>
    </location>
</feature>
<feature type="modified residue" description="Phosphothreonine; by PAK2" evidence="2">
    <location>
        <position position="289"/>
    </location>
</feature>
<feature type="cross-link" description="Glycyl lysine isopeptide (Lys-Gly) (interchain with G-Cter in SUMO2)" evidence="2">
    <location>
        <position position="35"/>
    </location>
</feature>
<feature type="cross-link" description="Glycyl lysine isopeptide (Lys-Gly) (interchain with G-Cter in SUMO2)" evidence="2">
    <location>
        <position position="50"/>
    </location>
</feature>
<feature type="cross-link" description="Glycyl lysine isopeptide (Lys-Gly) (interchain with G-Cter in SUMO2); alternate" evidence="2">
    <location>
        <position position="56"/>
    </location>
</feature>
<feature type="cross-link" description="Glycyl lysine isopeptide (Lys-Gly) (interchain with G-Cter in SUMO2)" evidence="2">
    <location>
        <position position="70"/>
    </location>
</feature>
<feature type="cross-link" description="Glycyl lysine isopeptide (Lys-Gly) (interchain with G-Cter in SUMO2)" evidence="2">
    <location>
        <position position="229"/>
    </location>
</feature>
<keyword id="KW-0007">Acetylation</keyword>
<keyword id="KW-0010">Activator</keyword>
<keyword id="KW-0238">DNA-binding</keyword>
<keyword id="KW-1017">Isopeptide bond</keyword>
<keyword id="KW-0539">Nucleus</keyword>
<keyword id="KW-0597">Phosphoprotein</keyword>
<keyword id="KW-0656">Proto-oncogene</keyword>
<keyword id="KW-1185">Reference proteome</keyword>
<keyword id="KW-0804">Transcription</keyword>
<keyword id="KW-0805">Transcription regulation</keyword>
<keyword id="KW-0832">Ubl conjugation</keyword>
<dbReference type="EMBL" id="X17163">
    <property type="protein sequence ID" value="CAA35041.1"/>
    <property type="molecule type" value="mRNA"/>
</dbReference>
<dbReference type="EMBL" id="X17215">
    <property type="protein sequence ID" value="CAA35084.1"/>
    <property type="molecule type" value="Genomic_DNA"/>
</dbReference>
<dbReference type="EMBL" id="BC078738">
    <property type="protein sequence ID" value="AAH78738.1"/>
    <property type="molecule type" value="mRNA"/>
</dbReference>
<dbReference type="PIR" id="S12742">
    <property type="entry name" value="S12742"/>
</dbReference>
<dbReference type="RefSeq" id="NP_068607.1">
    <property type="nucleotide sequence ID" value="NM_021835.3"/>
</dbReference>
<dbReference type="SMR" id="P17325"/>
<dbReference type="BioGRID" id="246671">
    <property type="interactions" value="8"/>
</dbReference>
<dbReference type="CORUM" id="P17325"/>
<dbReference type="DIP" id="DIP-653N"/>
<dbReference type="FunCoup" id="P17325">
    <property type="interactions" value="2361"/>
</dbReference>
<dbReference type="IntAct" id="P17325">
    <property type="interactions" value="3"/>
</dbReference>
<dbReference type="MINT" id="P17325"/>
<dbReference type="STRING" id="10116.ENSRNOP00000011732"/>
<dbReference type="BindingDB" id="P17325"/>
<dbReference type="ChEMBL" id="CHEMBL3341579"/>
<dbReference type="GlyGen" id="P17325">
    <property type="glycosylation" value="1 site, 1 O-linked glycan (1 site)"/>
</dbReference>
<dbReference type="iPTMnet" id="P17325"/>
<dbReference type="PhosphoSitePlus" id="P17325"/>
<dbReference type="PaxDb" id="10116-ENSRNOP00000011732"/>
<dbReference type="Ensembl" id="ENSRNOT00000011731.4">
    <property type="protein sequence ID" value="ENSRNOP00000011732.1"/>
    <property type="gene ID" value="ENSRNOG00000026293.3"/>
</dbReference>
<dbReference type="GeneID" id="24516"/>
<dbReference type="KEGG" id="rno:24516"/>
<dbReference type="UCSC" id="RGD:2943">
    <property type="organism name" value="rat"/>
</dbReference>
<dbReference type="AGR" id="RGD:2943"/>
<dbReference type="CTD" id="3725"/>
<dbReference type="RGD" id="2943">
    <property type="gene designation" value="Jun"/>
</dbReference>
<dbReference type="eggNOG" id="KOG0837">
    <property type="taxonomic scope" value="Eukaryota"/>
</dbReference>
<dbReference type="GeneTree" id="ENSGT00940000162061"/>
<dbReference type="HOGENOM" id="CLU_057007_0_0_1"/>
<dbReference type="InParanoid" id="P17325"/>
<dbReference type="OMA" id="HHQHMPA"/>
<dbReference type="OrthoDB" id="2187714at2759"/>
<dbReference type="PhylomeDB" id="P17325"/>
<dbReference type="TreeFam" id="TF323952"/>
<dbReference type="Reactome" id="R-RNO-2559580">
    <property type="pathway name" value="Oxidative Stress Induced Senescence"/>
</dbReference>
<dbReference type="Reactome" id="R-RNO-2871796">
    <property type="pathway name" value="FCERI mediated MAPK activation"/>
</dbReference>
<dbReference type="Reactome" id="R-RNO-450341">
    <property type="pathway name" value="Activation of the AP-1 family of transcription factors"/>
</dbReference>
<dbReference type="Reactome" id="R-RNO-9018519">
    <property type="pathway name" value="Estrogen-dependent gene expression"/>
</dbReference>
<dbReference type="PRO" id="PR:P17325"/>
<dbReference type="Proteomes" id="UP000002494">
    <property type="component" value="Chromosome 5"/>
</dbReference>
<dbReference type="Bgee" id="ENSRNOG00000026293">
    <property type="expression patterns" value="Expressed in lung and 20 other cell types or tissues"/>
</dbReference>
<dbReference type="GO" id="GO:0000785">
    <property type="term" value="C:chromatin"/>
    <property type="evidence" value="ECO:0000314"/>
    <property type="project" value="RGD"/>
</dbReference>
<dbReference type="GO" id="GO:0000791">
    <property type="term" value="C:euchromatin"/>
    <property type="evidence" value="ECO:0000266"/>
    <property type="project" value="RGD"/>
</dbReference>
<dbReference type="GO" id="GO:0005634">
    <property type="term" value="C:nucleus"/>
    <property type="evidence" value="ECO:0000266"/>
    <property type="project" value="RGD"/>
</dbReference>
<dbReference type="GO" id="GO:0032991">
    <property type="term" value="C:protein-containing complex"/>
    <property type="evidence" value="ECO:0000314"/>
    <property type="project" value="RGD"/>
</dbReference>
<dbReference type="GO" id="GO:0090575">
    <property type="term" value="C:RNA polymerase II transcription regulator complex"/>
    <property type="evidence" value="ECO:0000266"/>
    <property type="project" value="RGD"/>
</dbReference>
<dbReference type="GO" id="GO:0035976">
    <property type="term" value="C:transcription factor AP-1 complex"/>
    <property type="evidence" value="ECO:0000266"/>
    <property type="project" value="RGD"/>
</dbReference>
<dbReference type="GO" id="GO:0005667">
    <property type="term" value="C:transcription regulator complex"/>
    <property type="evidence" value="ECO:0000266"/>
    <property type="project" value="RGD"/>
</dbReference>
<dbReference type="GO" id="GO:0017053">
    <property type="term" value="C:transcription repressor complex"/>
    <property type="evidence" value="ECO:0000266"/>
    <property type="project" value="RGD"/>
</dbReference>
<dbReference type="GO" id="GO:0035497">
    <property type="term" value="F:cAMP response element binding"/>
    <property type="evidence" value="ECO:0000266"/>
    <property type="project" value="RGD"/>
</dbReference>
<dbReference type="GO" id="GO:0003682">
    <property type="term" value="F:chromatin binding"/>
    <property type="evidence" value="ECO:0000266"/>
    <property type="project" value="RGD"/>
</dbReference>
<dbReference type="GO" id="GO:0003677">
    <property type="term" value="F:DNA binding"/>
    <property type="evidence" value="ECO:0000266"/>
    <property type="project" value="RGD"/>
</dbReference>
<dbReference type="GO" id="GO:0001228">
    <property type="term" value="F:DNA-binding transcription activator activity, RNA polymerase II-specific"/>
    <property type="evidence" value="ECO:0000315"/>
    <property type="project" value="RGD"/>
</dbReference>
<dbReference type="GO" id="GO:0003700">
    <property type="term" value="F:DNA-binding transcription factor activity"/>
    <property type="evidence" value="ECO:0000315"/>
    <property type="project" value="RGD"/>
</dbReference>
<dbReference type="GO" id="GO:0000981">
    <property type="term" value="F:DNA-binding transcription factor activity, RNA polymerase II-specific"/>
    <property type="evidence" value="ECO:0000266"/>
    <property type="project" value="RGD"/>
</dbReference>
<dbReference type="GO" id="GO:0001227">
    <property type="term" value="F:DNA-binding transcription repressor activity, RNA polymerase II-specific"/>
    <property type="evidence" value="ECO:0000266"/>
    <property type="project" value="RGD"/>
</dbReference>
<dbReference type="GO" id="GO:0003690">
    <property type="term" value="F:double-stranded DNA binding"/>
    <property type="evidence" value="ECO:0000314"/>
    <property type="project" value="RGD"/>
</dbReference>
<dbReference type="GO" id="GO:0019899">
    <property type="term" value="F:enzyme binding"/>
    <property type="evidence" value="ECO:0000266"/>
    <property type="project" value="RGD"/>
</dbReference>
<dbReference type="GO" id="GO:0140296">
    <property type="term" value="F:general transcription initiation factor binding"/>
    <property type="evidence" value="ECO:0000266"/>
    <property type="project" value="RGD"/>
</dbReference>
<dbReference type="GO" id="GO:0005096">
    <property type="term" value="F:GTPase activator activity"/>
    <property type="evidence" value="ECO:0000266"/>
    <property type="project" value="RGD"/>
</dbReference>
<dbReference type="GO" id="GO:0071837">
    <property type="term" value="F:HMG box domain binding"/>
    <property type="evidence" value="ECO:0000353"/>
    <property type="project" value="UniProtKB"/>
</dbReference>
<dbReference type="GO" id="GO:0042802">
    <property type="term" value="F:identical protein binding"/>
    <property type="evidence" value="ECO:0000353"/>
    <property type="project" value="RGD"/>
</dbReference>
<dbReference type="GO" id="GO:0042803">
    <property type="term" value="F:protein homodimerization activity"/>
    <property type="evidence" value="ECO:0000304"/>
    <property type="project" value="RGD"/>
</dbReference>
<dbReference type="GO" id="GO:0044877">
    <property type="term" value="F:protein-containing complex binding"/>
    <property type="evidence" value="ECO:0000353"/>
    <property type="project" value="RGD"/>
</dbReference>
<dbReference type="GO" id="GO:0070412">
    <property type="term" value="F:R-SMAD binding"/>
    <property type="evidence" value="ECO:0000266"/>
    <property type="project" value="RGD"/>
</dbReference>
<dbReference type="GO" id="GO:0000978">
    <property type="term" value="F:RNA polymerase II cis-regulatory region sequence-specific DNA binding"/>
    <property type="evidence" value="ECO:0000266"/>
    <property type="project" value="RGD"/>
</dbReference>
<dbReference type="GO" id="GO:0061629">
    <property type="term" value="F:RNA polymerase II-specific DNA-binding transcription factor binding"/>
    <property type="evidence" value="ECO:0000266"/>
    <property type="project" value="RGD"/>
</dbReference>
<dbReference type="GO" id="GO:0043565">
    <property type="term" value="F:sequence-specific DNA binding"/>
    <property type="evidence" value="ECO:0000314"/>
    <property type="project" value="RGD"/>
</dbReference>
<dbReference type="GO" id="GO:1990837">
    <property type="term" value="F:sequence-specific double-stranded DNA binding"/>
    <property type="evidence" value="ECO:0000266"/>
    <property type="project" value="RGD"/>
</dbReference>
<dbReference type="GO" id="GO:0000976">
    <property type="term" value="F:transcription cis-regulatory region binding"/>
    <property type="evidence" value="ECO:0000250"/>
    <property type="project" value="UniProtKB"/>
</dbReference>
<dbReference type="GO" id="GO:0031625">
    <property type="term" value="F:ubiquitin protein ligase binding"/>
    <property type="evidence" value="ECO:0000266"/>
    <property type="project" value="RGD"/>
</dbReference>
<dbReference type="GO" id="GO:0044389">
    <property type="term" value="F:ubiquitin-like protein ligase binding"/>
    <property type="evidence" value="ECO:0000266"/>
    <property type="project" value="RGD"/>
</dbReference>
<dbReference type="GO" id="GO:0001525">
    <property type="term" value="P:angiogenesis"/>
    <property type="evidence" value="ECO:0000315"/>
    <property type="project" value="RGD"/>
</dbReference>
<dbReference type="GO" id="GO:0006915">
    <property type="term" value="P:apoptotic process"/>
    <property type="evidence" value="ECO:0000266"/>
    <property type="project" value="RGD"/>
</dbReference>
<dbReference type="GO" id="GO:0031103">
    <property type="term" value="P:axon regeneration"/>
    <property type="evidence" value="ECO:0000266"/>
    <property type="project" value="RGD"/>
</dbReference>
<dbReference type="GO" id="GO:0008283">
    <property type="term" value="P:cell population proliferation"/>
    <property type="evidence" value="ECO:0000266"/>
    <property type="project" value="RGD"/>
</dbReference>
<dbReference type="GO" id="GO:0072740">
    <property type="term" value="P:cellular response to anisomycin"/>
    <property type="evidence" value="ECO:0000266"/>
    <property type="project" value="RGD"/>
</dbReference>
<dbReference type="GO" id="GO:0071277">
    <property type="term" value="P:cellular response to calcium ion"/>
    <property type="evidence" value="ECO:0000266"/>
    <property type="project" value="RGD"/>
</dbReference>
<dbReference type="GO" id="GO:0071456">
    <property type="term" value="P:cellular response to hypoxia"/>
    <property type="evidence" value="ECO:0000270"/>
    <property type="project" value="RGD"/>
</dbReference>
<dbReference type="GO" id="GO:0071222">
    <property type="term" value="P:cellular response to lipopolysaccharide"/>
    <property type="evidence" value="ECO:0000266"/>
    <property type="project" value="RGD"/>
</dbReference>
<dbReference type="GO" id="GO:0051365">
    <property type="term" value="P:cellular response to potassium ion starvation"/>
    <property type="evidence" value="ECO:0000315"/>
    <property type="project" value="RGD"/>
</dbReference>
<dbReference type="GO" id="GO:1990646">
    <property type="term" value="P:cellular response to prolactin"/>
    <property type="evidence" value="ECO:0000270"/>
    <property type="project" value="RGD"/>
</dbReference>
<dbReference type="GO" id="GO:0034224">
    <property type="term" value="P:cellular response to zinc ion starvation"/>
    <property type="evidence" value="ECO:0000270"/>
    <property type="project" value="RGD"/>
</dbReference>
<dbReference type="GO" id="GO:0007623">
    <property type="term" value="P:circadian rhythm"/>
    <property type="evidence" value="ECO:0000270"/>
    <property type="project" value="RGD"/>
</dbReference>
<dbReference type="GO" id="GO:0006351">
    <property type="term" value="P:DNA-templated transcription"/>
    <property type="evidence" value="ECO:0000314"/>
    <property type="project" value="UniProtKB"/>
</dbReference>
<dbReference type="GO" id="GO:0061029">
    <property type="term" value="P:eyelid development in camera-type eye"/>
    <property type="evidence" value="ECO:0000266"/>
    <property type="project" value="RGD"/>
</dbReference>
<dbReference type="GO" id="GO:0006955">
    <property type="term" value="P:immune response"/>
    <property type="evidence" value="ECO:0000266"/>
    <property type="project" value="RGD"/>
</dbReference>
<dbReference type="GO" id="GO:0007254">
    <property type="term" value="P:JNK cascade"/>
    <property type="evidence" value="ECO:0007669"/>
    <property type="project" value="Ensembl"/>
</dbReference>
<dbReference type="GO" id="GO:0035026">
    <property type="term" value="P:leading edge cell differentiation"/>
    <property type="evidence" value="ECO:0000266"/>
    <property type="project" value="RGD"/>
</dbReference>
<dbReference type="GO" id="GO:0007612">
    <property type="term" value="P:learning"/>
    <property type="evidence" value="ECO:0000315"/>
    <property type="project" value="RGD"/>
</dbReference>
<dbReference type="GO" id="GO:0001889">
    <property type="term" value="P:liver development"/>
    <property type="evidence" value="ECO:0000266"/>
    <property type="project" value="RGD"/>
</dbReference>
<dbReference type="GO" id="GO:0051899">
    <property type="term" value="P:membrane depolarization"/>
    <property type="evidence" value="ECO:0000314"/>
    <property type="project" value="RGD"/>
</dbReference>
<dbReference type="GO" id="GO:0001774">
    <property type="term" value="P:microglial cell activation"/>
    <property type="evidence" value="ECO:0000266"/>
    <property type="project" value="RGD"/>
</dbReference>
<dbReference type="GO" id="GO:0030224">
    <property type="term" value="P:monocyte differentiation"/>
    <property type="evidence" value="ECO:0000266"/>
    <property type="project" value="RGD"/>
</dbReference>
<dbReference type="GO" id="GO:0043066">
    <property type="term" value="P:negative regulation of apoptotic process"/>
    <property type="evidence" value="ECO:0000266"/>
    <property type="project" value="RGD"/>
</dbReference>
<dbReference type="GO" id="GO:0008285">
    <property type="term" value="P:negative regulation of cell population proliferation"/>
    <property type="evidence" value="ECO:0000266"/>
    <property type="project" value="RGD"/>
</dbReference>
<dbReference type="GO" id="GO:0045892">
    <property type="term" value="P:negative regulation of DNA-templated transcription"/>
    <property type="evidence" value="ECO:0000266"/>
    <property type="project" value="RGD"/>
</dbReference>
<dbReference type="GO" id="GO:0043524">
    <property type="term" value="P:negative regulation of neuron apoptotic process"/>
    <property type="evidence" value="ECO:0000266"/>
    <property type="project" value="RGD"/>
</dbReference>
<dbReference type="GO" id="GO:0000122">
    <property type="term" value="P:negative regulation of transcription by RNA polymerase II"/>
    <property type="evidence" value="ECO:0000266"/>
    <property type="project" value="RGD"/>
</dbReference>
<dbReference type="GO" id="GO:0003151">
    <property type="term" value="P:outflow tract morphogenesis"/>
    <property type="evidence" value="ECO:0000266"/>
    <property type="project" value="RGD"/>
</dbReference>
<dbReference type="GO" id="GO:0043065">
    <property type="term" value="P:positive regulation of apoptotic process"/>
    <property type="evidence" value="ECO:0000315"/>
    <property type="project" value="RGD"/>
</dbReference>
<dbReference type="GO" id="GO:2001235">
    <property type="term" value="P:positive regulation of apoptotic signaling pathway"/>
    <property type="evidence" value="ECO:0000315"/>
    <property type="project" value="RGD"/>
</dbReference>
<dbReference type="GO" id="GO:0008284">
    <property type="term" value="P:positive regulation of cell population proliferation"/>
    <property type="evidence" value="ECO:0000315"/>
    <property type="project" value="RGD"/>
</dbReference>
<dbReference type="GO" id="GO:0045740">
    <property type="term" value="P:positive regulation of DNA replication"/>
    <property type="evidence" value="ECO:0000315"/>
    <property type="project" value="RGD"/>
</dbReference>
<dbReference type="GO" id="GO:0045893">
    <property type="term" value="P:positive regulation of DNA-templated transcription"/>
    <property type="evidence" value="ECO:0000314"/>
    <property type="project" value="UniProtKB"/>
</dbReference>
<dbReference type="GO" id="GO:2000144">
    <property type="term" value="P:positive regulation of DNA-templated transcription initiation"/>
    <property type="evidence" value="ECO:0000266"/>
    <property type="project" value="RGD"/>
</dbReference>
<dbReference type="GO" id="GO:0001938">
    <property type="term" value="P:positive regulation of endothelial cell proliferation"/>
    <property type="evidence" value="ECO:0000266"/>
    <property type="project" value="RGD"/>
</dbReference>
<dbReference type="GO" id="GO:0010634">
    <property type="term" value="P:positive regulation of epithelial cell migration"/>
    <property type="evidence" value="ECO:0000266"/>
    <property type="project" value="RGD"/>
</dbReference>
<dbReference type="GO" id="GO:0070374">
    <property type="term" value="P:positive regulation of ERK1 and ERK2 cascade"/>
    <property type="evidence" value="ECO:0000266"/>
    <property type="project" value="RGD"/>
</dbReference>
<dbReference type="GO" id="GO:0048146">
    <property type="term" value="P:positive regulation of fibroblast proliferation"/>
    <property type="evidence" value="ECO:0000266"/>
    <property type="project" value="RGD"/>
</dbReference>
<dbReference type="GO" id="GO:1902895">
    <property type="term" value="P:positive regulation of miRNA transcription"/>
    <property type="evidence" value="ECO:0000314"/>
    <property type="project" value="BHF-UCL"/>
</dbReference>
<dbReference type="GO" id="GO:0045657">
    <property type="term" value="P:positive regulation of monocyte differentiation"/>
    <property type="evidence" value="ECO:0000314"/>
    <property type="project" value="RGD"/>
</dbReference>
<dbReference type="GO" id="GO:0043525">
    <property type="term" value="P:positive regulation of neuron apoptotic process"/>
    <property type="evidence" value="ECO:0000315"/>
    <property type="project" value="RGD"/>
</dbReference>
<dbReference type="GO" id="GO:0048661">
    <property type="term" value="P:positive regulation of smooth muscle cell proliferation"/>
    <property type="evidence" value="ECO:0000314"/>
    <property type="project" value="RGD"/>
</dbReference>
<dbReference type="GO" id="GO:0045944">
    <property type="term" value="P:positive regulation of transcription by RNA polymerase II"/>
    <property type="evidence" value="ECO:0000314"/>
    <property type="project" value="RGD"/>
</dbReference>
<dbReference type="GO" id="GO:1904707">
    <property type="term" value="P:positive regulation of vascular associated smooth muscle cell proliferation"/>
    <property type="evidence" value="ECO:0000266"/>
    <property type="project" value="RGD"/>
</dbReference>
<dbReference type="GO" id="GO:0051726">
    <property type="term" value="P:regulation of cell cycle"/>
    <property type="evidence" value="ECO:0000266"/>
    <property type="project" value="RGD"/>
</dbReference>
<dbReference type="GO" id="GO:0042127">
    <property type="term" value="P:regulation of cell population proliferation"/>
    <property type="evidence" value="ECO:0000318"/>
    <property type="project" value="GO_Central"/>
</dbReference>
<dbReference type="GO" id="GO:0006355">
    <property type="term" value="P:regulation of DNA-templated transcription"/>
    <property type="evidence" value="ECO:0000266"/>
    <property type="project" value="RGD"/>
</dbReference>
<dbReference type="GO" id="GO:0006357">
    <property type="term" value="P:regulation of transcription by RNA polymerase II"/>
    <property type="evidence" value="ECO:0000266"/>
    <property type="project" value="RGD"/>
</dbReference>
<dbReference type="GO" id="GO:0019046">
    <property type="term" value="P:release from viral latency"/>
    <property type="evidence" value="ECO:0000266"/>
    <property type="project" value="RGD"/>
</dbReference>
<dbReference type="GO" id="GO:0001836">
    <property type="term" value="P:release of cytochrome c from mitochondria"/>
    <property type="evidence" value="ECO:0000315"/>
    <property type="project" value="RGD"/>
</dbReference>
<dbReference type="GO" id="GO:0051591">
    <property type="term" value="P:response to cAMP"/>
    <property type="evidence" value="ECO:0000270"/>
    <property type="project" value="RGD"/>
</dbReference>
<dbReference type="GO" id="GO:0034097">
    <property type="term" value="P:response to cytokine"/>
    <property type="evidence" value="ECO:0000270"/>
    <property type="project" value="RGD"/>
</dbReference>
<dbReference type="GO" id="GO:0034976">
    <property type="term" value="P:response to endoplasmic reticulum stress"/>
    <property type="evidence" value="ECO:0000266"/>
    <property type="project" value="RGD"/>
</dbReference>
<dbReference type="GO" id="GO:0045471">
    <property type="term" value="P:response to ethanol"/>
    <property type="evidence" value="ECO:0000270"/>
    <property type="project" value="RGD"/>
</dbReference>
<dbReference type="GO" id="GO:1904321">
    <property type="term" value="P:response to forskolin"/>
    <property type="evidence" value="ECO:0000270"/>
    <property type="project" value="RGD"/>
</dbReference>
<dbReference type="GO" id="GO:0042542">
    <property type="term" value="P:response to hydrogen peroxide"/>
    <property type="evidence" value="ECO:0000270"/>
    <property type="project" value="RGD"/>
</dbReference>
<dbReference type="GO" id="GO:0032868">
    <property type="term" value="P:response to insulin"/>
    <property type="evidence" value="ECO:0000270"/>
    <property type="project" value="RGD"/>
</dbReference>
<dbReference type="GO" id="GO:0032496">
    <property type="term" value="P:response to lipopolysaccharide"/>
    <property type="evidence" value="ECO:0000270"/>
    <property type="project" value="RGD"/>
</dbReference>
<dbReference type="GO" id="GO:0009612">
    <property type="term" value="P:response to mechanical stimulus"/>
    <property type="evidence" value="ECO:0000270"/>
    <property type="project" value="RGD"/>
</dbReference>
<dbReference type="GO" id="GO:0035994">
    <property type="term" value="P:response to muscle stretch"/>
    <property type="evidence" value="ECO:0000266"/>
    <property type="project" value="RGD"/>
</dbReference>
<dbReference type="GO" id="GO:0048545">
    <property type="term" value="P:response to steroid hormone"/>
    <property type="evidence" value="ECO:0000270"/>
    <property type="project" value="RGD"/>
</dbReference>
<dbReference type="GO" id="GO:0009410">
    <property type="term" value="P:response to xenobiotic stimulus"/>
    <property type="evidence" value="ECO:0000270"/>
    <property type="project" value="RGD"/>
</dbReference>
<dbReference type="GO" id="GO:0060395">
    <property type="term" value="P:SMAD protein signal transduction"/>
    <property type="evidence" value="ECO:0000266"/>
    <property type="project" value="RGD"/>
</dbReference>
<dbReference type="GO" id="GO:0006366">
    <property type="term" value="P:transcription by RNA polymerase II"/>
    <property type="evidence" value="ECO:0000315"/>
    <property type="project" value="RGD"/>
</dbReference>
<dbReference type="GO" id="GO:0007179">
    <property type="term" value="P:transforming growth factor beta receptor signaling pathway"/>
    <property type="evidence" value="ECO:0000266"/>
    <property type="project" value="RGD"/>
</dbReference>
<dbReference type="CDD" id="cd14696">
    <property type="entry name" value="bZIP_Jun"/>
    <property type="match status" value="1"/>
</dbReference>
<dbReference type="FunFam" id="1.20.5.170:FF:000012">
    <property type="entry name" value="Putative transcription factor AP-1"/>
    <property type="match status" value="1"/>
</dbReference>
<dbReference type="Gene3D" id="1.20.5.170">
    <property type="match status" value="1"/>
</dbReference>
<dbReference type="InterPro" id="IPR050946">
    <property type="entry name" value="AP-1_TF_bZIP"/>
</dbReference>
<dbReference type="InterPro" id="IPR004827">
    <property type="entry name" value="bZIP"/>
</dbReference>
<dbReference type="InterPro" id="IPR046347">
    <property type="entry name" value="bZIP_sf"/>
</dbReference>
<dbReference type="InterPro" id="IPR005643">
    <property type="entry name" value="JNK"/>
</dbReference>
<dbReference type="InterPro" id="IPR002112">
    <property type="entry name" value="Leuzip_Jun"/>
</dbReference>
<dbReference type="InterPro" id="IPR008917">
    <property type="entry name" value="TF_DNA-bd_sf"/>
</dbReference>
<dbReference type="PANTHER" id="PTHR11462">
    <property type="entry name" value="JUN TRANSCRIPTION FACTOR-RELATED"/>
    <property type="match status" value="1"/>
</dbReference>
<dbReference type="PANTHER" id="PTHR11462:SF8">
    <property type="entry name" value="TRANSCRIPTION FACTOR JUN"/>
    <property type="match status" value="1"/>
</dbReference>
<dbReference type="Pfam" id="PF00170">
    <property type="entry name" value="bZIP_1"/>
    <property type="match status" value="1"/>
</dbReference>
<dbReference type="Pfam" id="PF03957">
    <property type="entry name" value="Jun"/>
    <property type="match status" value="1"/>
</dbReference>
<dbReference type="PRINTS" id="PR00043">
    <property type="entry name" value="LEUZIPPRJUN"/>
</dbReference>
<dbReference type="SMART" id="SM00338">
    <property type="entry name" value="BRLZ"/>
    <property type="match status" value="1"/>
</dbReference>
<dbReference type="SUPFAM" id="SSF47454">
    <property type="entry name" value="A DNA-binding domain in eukaryotic transcription factors"/>
    <property type="match status" value="1"/>
</dbReference>
<dbReference type="SUPFAM" id="SSF57959">
    <property type="entry name" value="Leucine zipper domain"/>
    <property type="match status" value="1"/>
</dbReference>
<dbReference type="PROSITE" id="PS50217">
    <property type="entry name" value="BZIP"/>
    <property type="match status" value="1"/>
</dbReference>
<dbReference type="PROSITE" id="PS00036">
    <property type="entry name" value="BZIP_BASIC"/>
    <property type="match status" value="1"/>
</dbReference>
<sequence length="334" mass="36001">MTAKMETTFYDDALNASFLQSESGAYGYSNPKILKQSMTLNLADPVGNLKPHLRAKNSDLLTSPDVGLLKLASPELERLIIQSSNGHITTTPTPTQFLCPKNVTDEQEGFAEGFVRALAELHSQNTLPSVTSAAQPVSGAGMVAPAVASVAGAGGGGGYSASLHSEPPVYANLSNFNPGALSSGGGAPSYGATGLAFPSQPQQQQQPPQPPHHLPQQIPVQHPRLQALKEEPQTVPEMPGETPPLSPIDMESQERIKAERKRMRNRIAASKCRKRKLERIARLEEKVKTLKAQNSELASTANMLREQVAQLKQKVMNHVNSGCQLMLTQQLQTF</sequence>
<evidence type="ECO:0000250" key="1"/>
<evidence type="ECO:0000250" key="2">
    <source>
        <dbReference type="UniProtKB" id="P05412"/>
    </source>
</evidence>
<evidence type="ECO:0000250" key="3">
    <source>
        <dbReference type="UniProtKB" id="P05627"/>
    </source>
</evidence>
<evidence type="ECO:0000255" key="4">
    <source>
        <dbReference type="PROSITE-ProRule" id="PRU00978"/>
    </source>
</evidence>
<evidence type="ECO:0000256" key="5">
    <source>
        <dbReference type="SAM" id="MobiDB-lite"/>
    </source>
</evidence>
<evidence type="ECO:0000269" key="6">
    <source>
    </source>
</evidence>
<evidence type="ECO:0000269" key="7">
    <source>
    </source>
</evidence>
<evidence type="ECO:0000269" key="8">
    <source>
    </source>
</evidence>
<evidence type="ECO:0000305" key="9"/>
<gene>
    <name type="primary">Jun</name>
    <name type="synonym">Rjg-9</name>
</gene>
<protein>
    <recommendedName>
        <fullName evidence="9">Transcription factor Jun</fullName>
    </recommendedName>
    <alternativeName>
        <fullName>Activator protein 1</fullName>
        <shortName>AP1</shortName>
    </alternativeName>
    <alternativeName>
        <fullName>Proto-oncogene c-Jun</fullName>
    </alternativeName>
    <alternativeName>
        <fullName evidence="9">Transcription factor AP-1 subunit Jun</fullName>
    </alternativeName>
    <alternativeName>
        <fullName>V-jun avian sarcoma virus 17 oncogene homolog</fullName>
    </alternativeName>
</protein>
<accession>P17325</accession>
<organism>
    <name type="scientific">Rattus norvegicus</name>
    <name type="common">Rat</name>
    <dbReference type="NCBI Taxonomy" id="10116"/>
    <lineage>
        <taxon>Eukaryota</taxon>
        <taxon>Metazoa</taxon>
        <taxon>Chordata</taxon>
        <taxon>Craniata</taxon>
        <taxon>Vertebrata</taxon>
        <taxon>Euteleostomi</taxon>
        <taxon>Mammalia</taxon>
        <taxon>Eutheria</taxon>
        <taxon>Euarchontoglires</taxon>
        <taxon>Glires</taxon>
        <taxon>Rodentia</taxon>
        <taxon>Myomorpha</taxon>
        <taxon>Muroidea</taxon>
        <taxon>Muridae</taxon>
        <taxon>Murinae</taxon>
        <taxon>Rattus</taxon>
    </lineage>
</organism>
<proteinExistence type="evidence at protein level"/>
<reference key="1">
    <citation type="journal article" date="1989" name="Cancer Res.">
        <title>Structure and expression of the rat c-jun messenger RNA: tissue distribution and increase during chemical hepatocarcinogenesis.</title>
        <authorList>
            <person name="Sakai M."/>
            <person name="Okuda A."/>
            <person name="Hatayama I."/>
            <person name="Sato K."/>
            <person name="Nishi S."/>
            <person name="Muramatsu M."/>
        </authorList>
    </citation>
    <scope>NUCLEOTIDE SEQUENCE [MRNA]</scope>
    <source>
        <tissue>Liver</tissue>
    </source>
</reference>
<reference key="2">
    <citation type="journal article" date="1990" name="Nucleic Acids Res.">
        <title>Nucleotide sequence of rat c-jun protooncogene.</title>
        <authorList>
            <person name="Kitabayashi I."/>
            <person name="Saka F."/>
            <person name="Gachelin G."/>
            <person name="Yokoyama K."/>
        </authorList>
    </citation>
    <scope>NUCLEOTIDE SEQUENCE [GENOMIC DNA]</scope>
    <source>
        <strain>Fischer</strain>
    </source>
</reference>
<reference key="3">
    <citation type="journal article" date="1992" name="EMBO J.">
        <title>Transcriptional regulation of the c-jun gene by retinoic acid and E1A during differentiation of F9 cells.</title>
        <authorList>
            <person name="Kitabayashi I."/>
            <person name="Kawakami Z."/>
            <person name="Chiu R."/>
            <person name="Ozawa K."/>
            <person name="Matsuoka T."/>
            <person name="Toyoshima S."/>
            <person name="Umesono K."/>
            <person name="Evans R.M."/>
            <person name="Gachelin G."/>
            <person name="Yokoyama K."/>
        </authorList>
    </citation>
    <scope>NUCLEOTIDE SEQUENCE [MRNA]</scope>
    <source>
        <strain>Fischer</strain>
    </source>
</reference>
<reference key="4">
    <citation type="journal article" date="2004" name="Genome Res.">
        <title>The status, quality, and expansion of the NIH full-length cDNA project: the Mammalian Gene Collection (MGC).</title>
        <authorList>
            <consortium name="The MGC Project Team"/>
        </authorList>
    </citation>
    <scope>NUCLEOTIDE SEQUENCE [LARGE SCALE MRNA]</scope>
    <source>
        <tissue>Lung</tissue>
    </source>
</reference>
<reference key="5">
    <citation type="journal article" date="1997" name="Mol. Cell. Biol.">
        <title>Isolation of an AP-1 repressor by a novel method for detecting protein-protein interactions.</title>
        <authorList>
            <person name="Aronheim A."/>
            <person name="Zandi E."/>
            <person name="Hennemann H."/>
            <person name="Elledge S.J."/>
            <person name="Karin M."/>
        </authorList>
    </citation>
    <scope>INTERACTION WITH BATF3</scope>
</reference>
<reference key="6">
    <citation type="journal article" date="2010" name="Nat. Cell Biol.">
        <title>Identification of a co-activator that links growth factor signalling to c-Jun/AP-1 activation.</title>
        <authorList>
            <person name="Davies C.C."/>
            <person name="Chakraborty A."/>
            <person name="Cipriani F."/>
            <person name="Haigh K."/>
            <person name="Haigh J.J."/>
            <person name="Behrens A."/>
        </authorList>
    </citation>
    <scope>INTERACTION WITH RNF187</scope>
</reference>
<reference key="7">
    <citation type="journal article" date="2012" name="Nat. Commun.">
        <title>Quantitative maps of protein phosphorylation sites across 14 different rat organs and tissues.</title>
        <authorList>
            <person name="Lundby A."/>
            <person name="Secher A."/>
            <person name="Lage K."/>
            <person name="Nordsborg N.B."/>
            <person name="Dmytriyev A."/>
            <person name="Lundby C."/>
            <person name="Olsen J.V."/>
        </authorList>
    </citation>
    <scope>IDENTIFICATION BY MASS SPECTROMETRY [LARGE SCALE ANALYSIS]</scope>
</reference>
<reference key="8">
    <citation type="journal article" date="2016" name="EMBO J.">
        <title>Synaptonuclear messenger PRR7 inhibits c-Jun ubiquitination and regulates NMDA-mediated excitotoxicity.</title>
        <authorList>
            <person name="Kravchick D.O."/>
            <person name="Karpova A."/>
            <person name="Hrdinka M."/>
            <person name="Lopez-Rojas J."/>
            <person name="Iacobas S."/>
            <person name="Carbonell A.U."/>
            <person name="Iacobas D.A."/>
            <person name="Kreutz M.R."/>
            <person name="Jordan B.A."/>
        </authorList>
    </citation>
    <scope>INTERACTION WITH PRR7</scope>
    <scope>UBIQUITINATION</scope>
</reference>